<protein>
    <recommendedName>
        <fullName evidence="1">CRISPR-associated endonuclease Cas1 2</fullName>
        <ecNumber evidence="1">3.1.-.-</ecNumber>
    </recommendedName>
</protein>
<evidence type="ECO:0000255" key="1">
    <source>
        <dbReference type="HAMAP-Rule" id="MF_01470"/>
    </source>
</evidence>
<reference key="1">
    <citation type="journal article" date="2002" name="Proc. Natl. Acad. Sci. U.S.A.">
        <title>Genome sequence of the hyperthermophilic crenarchaeon Pyrobaculum aerophilum.</title>
        <authorList>
            <person name="Fitz-Gibbon S.T."/>
            <person name="Ladner H."/>
            <person name="Kim U.-J."/>
            <person name="Stetter K.O."/>
            <person name="Simon M.I."/>
            <person name="Miller J.H."/>
        </authorList>
    </citation>
    <scope>NUCLEOTIDE SEQUENCE [LARGE SCALE GENOMIC DNA]</scope>
    <source>
        <strain>ATCC 51768 / DSM 7523 / JCM 9630 / CIP 104966 / NBRC 100827 / IM2</strain>
    </source>
</reference>
<dbReference type="EC" id="3.1.-.-" evidence="1"/>
<dbReference type="EMBL" id="AE009441">
    <property type="protein sequence ID" value="AAL62621.1"/>
    <property type="molecule type" value="Genomic_DNA"/>
</dbReference>
<dbReference type="RefSeq" id="WP_011007093.1">
    <property type="nucleotide sequence ID" value="NC_003364.1"/>
</dbReference>
<dbReference type="SMR" id="Q8ZZL8"/>
<dbReference type="STRING" id="178306.PAE0200"/>
<dbReference type="EnsemblBacteria" id="AAL62621">
    <property type="protein sequence ID" value="AAL62621"/>
    <property type="gene ID" value="PAE0200"/>
</dbReference>
<dbReference type="GeneID" id="1464839"/>
<dbReference type="KEGG" id="pai:PAE0200"/>
<dbReference type="PATRIC" id="fig|178306.9.peg.143"/>
<dbReference type="eggNOG" id="arCOG01452">
    <property type="taxonomic scope" value="Archaea"/>
</dbReference>
<dbReference type="HOGENOM" id="CLU_052779_0_0_2"/>
<dbReference type="InParanoid" id="Q8ZZL8"/>
<dbReference type="Proteomes" id="UP000002439">
    <property type="component" value="Chromosome"/>
</dbReference>
<dbReference type="GO" id="GO:0003677">
    <property type="term" value="F:DNA binding"/>
    <property type="evidence" value="ECO:0007669"/>
    <property type="project" value="UniProtKB-KW"/>
</dbReference>
<dbReference type="GO" id="GO:0004519">
    <property type="term" value="F:endonuclease activity"/>
    <property type="evidence" value="ECO:0000318"/>
    <property type="project" value="GO_Central"/>
</dbReference>
<dbReference type="GO" id="GO:0046872">
    <property type="term" value="F:metal ion binding"/>
    <property type="evidence" value="ECO:0007669"/>
    <property type="project" value="UniProtKB-UniRule"/>
</dbReference>
<dbReference type="GO" id="GO:0099048">
    <property type="term" value="P:CRISPR-cas system"/>
    <property type="evidence" value="ECO:0000318"/>
    <property type="project" value="GO_Central"/>
</dbReference>
<dbReference type="GO" id="GO:0051607">
    <property type="term" value="P:defense response to virus"/>
    <property type="evidence" value="ECO:0007669"/>
    <property type="project" value="UniProtKB-UniRule"/>
</dbReference>
<dbReference type="GO" id="GO:0043571">
    <property type="term" value="P:maintenance of CRISPR repeat elements"/>
    <property type="evidence" value="ECO:0000318"/>
    <property type="project" value="GO_Central"/>
</dbReference>
<dbReference type="CDD" id="cd09634">
    <property type="entry name" value="Cas1_I-II-III"/>
    <property type="match status" value="1"/>
</dbReference>
<dbReference type="Gene3D" id="1.20.120.920">
    <property type="entry name" value="CRISPR-associated endonuclease Cas1, C-terminal domain"/>
    <property type="match status" value="1"/>
</dbReference>
<dbReference type="Gene3D" id="3.100.10.20">
    <property type="entry name" value="CRISPR-associated endonuclease Cas1, N-terminal domain"/>
    <property type="match status" value="1"/>
</dbReference>
<dbReference type="HAMAP" id="MF_01470">
    <property type="entry name" value="Cas1"/>
    <property type="match status" value="1"/>
</dbReference>
<dbReference type="InterPro" id="IPR050646">
    <property type="entry name" value="Cas1"/>
</dbReference>
<dbReference type="InterPro" id="IPR002729">
    <property type="entry name" value="CRISPR-assoc_Cas1"/>
</dbReference>
<dbReference type="InterPro" id="IPR042206">
    <property type="entry name" value="CRISPR-assoc_Cas1_C"/>
</dbReference>
<dbReference type="InterPro" id="IPR042211">
    <property type="entry name" value="CRISPR-assoc_Cas1_N"/>
</dbReference>
<dbReference type="NCBIfam" id="TIGR00287">
    <property type="entry name" value="cas1"/>
    <property type="match status" value="1"/>
</dbReference>
<dbReference type="PANTHER" id="PTHR34353">
    <property type="entry name" value="CRISPR-ASSOCIATED ENDONUCLEASE CAS1 1"/>
    <property type="match status" value="1"/>
</dbReference>
<dbReference type="PANTHER" id="PTHR34353:SF2">
    <property type="entry name" value="CRISPR-ASSOCIATED ENDONUCLEASE CAS1 1"/>
    <property type="match status" value="1"/>
</dbReference>
<dbReference type="Pfam" id="PF01867">
    <property type="entry name" value="Cas_Cas1"/>
    <property type="match status" value="1"/>
</dbReference>
<organism>
    <name type="scientific">Pyrobaculum aerophilum (strain ATCC 51768 / DSM 7523 / JCM 9630 / CIP 104966 / NBRC 100827 / IM2)</name>
    <dbReference type="NCBI Taxonomy" id="178306"/>
    <lineage>
        <taxon>Archaea</taxon>
        <taxon>Thermoproteota</taxon>
        <taxon>Thermoprotei</taxon>
        <taxon>Thermoproteales</taxon>
        <taxon>Thermoproteaceae</taxon>
        <taxon>Pyrobaculum</taxon>
    </lineage>
</organism>
<keyword id="KW-0051">Antiviral defense</keyword>
<keyword id="KW-0238">DNA-binding</keyword>
<keyword id="KW-0255">Endonuclease</keyword>
<keyword id="KW-0378">Hydrolase</keyword>
<keyword id="KW-0460">Magnesium</keyword>
<keyword id="KW-0464">Manganese</keyword>
<keyword id="KW-0479">Metal-binding</keyword>
<keyword id="KW-0540">Nuclease</keyword>
<keyword id="KW-1185">Reference proteome</keyword>
<gene>
    <name evidence="1" type="primary">cas1-2</name>
    <name type="ordered locus">PAE0200</name>
</gene>
<comment type="function">
    <text evidence="1">CRISPR (clustered regularly interspaced short palindromic repeat), is an adaptive immune system that provides protection against mobile genetic elements (viruses, transposable elements and conjugative plasmids). CRISPR clusters contain spacers, sequences complementary to antecedent mobile elements, and target invading nucleic acids. CRISPR clusters are transcribed and processed into CRISPR RNA (crRNA). Acts as a dsDNA endonuclease. Involved in the integration of spacer DNA into the CRISPR cassette.</text>
</comment>
<comment type="cofactor">
    <cofactor evidence="1">
        <name>Mg(2+)</name>
        <dbReference type="ChEBI" id="CHEBI:18420"/>
    </cofactor>
    <cofactor evidence="1">
        <name>Mn(2+)</name>
        <dbReference type="ChEBI" id="CHEBI:29035"/>
    </cofactor>
</comment>
<comment type="subunit">
    <text evidence="1">Homodimer, forms a heterotetramer with a Cas2 homodimer.</text>
</comment>
<comment type="similarity">
    <text evidence="1">Belongs to the CRISPR-associated endonuclease Cas1 family.</text>
</comment>
<feature type="chain" id="PRO_0000417108" description="CRISPR-associated endonuclease Cas1 2">
    <location>
        <begin position="1"/>
        <end position="295"/>
    </location>
</feature>
<feature type="binding site" evidence="1">
    <location>
        <position position="155"/>
    </location>
    <ligand>
        <name>Mn(2+)</name>
        <dbReference type="ChEBI" id="CHEBI:29035"/>
    </ligand>
</feature>
<feature type="binding site" evidence="1">
    <location>
        <position position="215"/>
    </location>
    <ligand>
        <name>Mn(2+)</name>
        <dbReference type="ChEBI" id="CHEBI:29035"/>
    </ligand>
</feature>
<feature type="binding site" evidence="1">
    <location>
        <position position="230"/>
    </location>
    <ligand>
        <name>Mn(2+)</name>
        <dbReference type="ChEBI" id="CHEBI:29035"/>
    </ligand>
</feature>
<accession>Q8ZZL8</accession>
<proteinExistence type="inferred from homology"/>
<sequence>MQIVVASYGARIRAKKGLLIVEGREGRREYPLHQVDEVLLLTGGISISTRALRALLRAGAVVAVFDQRGEPLGIFMKPVGDATGAKRLCQYAAATDGRGLQLAKKWVWLKIRGQLENLKRWRRRLGKYGTYAESISKAINALASAATPREVMEAEAAAAEAYWAAYREITGFPGRDQEGRDPVNAGLNYGYGILKALCFKSILLAGLDPYVGFLHADKSGRPSLVLDFMEQWRPRVDAVVAQLAEELEAENGLLTHKSRLRLAAAVLEEFNATGRPLSAEIHREARSIAKALCTS</sequence>
<name>CAS1B_PYRAE</name>